<reference key="1">
    <citation type="journal article" date="1996" name="Science">
        <title>Complete genome sequence of the methanogenic archaeon, Methanococcus jannaschii.</title>
        <authorList>
            <person name="Bult C.J."/>
            <person name="White O."/>
            <person name="Olsen G.J."/>
            <person name="Zhou L."/>
            <person name="Fleischmann R.D."/>
            <person name="Sutton G.G."/>
            <person name="Blake J.A."/>
            <person name="FitzGerald L.M."/>
            <person name="Clayton R.A."/>
            <person name="Gocayne J.D."/>
            <person name="Kerlavage A.R."/>
            <person name="Dougherty B.A."/>
            <person name="Tomb J.-F."/>
            <person name="Adams M.D."/>
            <person name="Reich C.I."/>
            <person name="Overbeek R."/>
            <person name="Kirkness E.F."/>
            <person name="Weinstock K.G."/>
            <person name="Merrick J.M."/>
            <person name="Glodek A."/>
            <person name="Scott J.L."/>
            <person name="Geoghagen N.S.M."/>
            <person name="Weidman J.F."/>
            <person name="Fuhrmann J.L."/>
            <person name="Nguyen D."/>
            <person name="Utterback T.R."/>
            <person name="Kelley J.M."/>
            <person name="Peterson J.D."/>
            <person name="Sadow P.W."/>
            <person name="Hanna M.C."/>
            <person name="Cotton M.D."/>
            <person name="Roberts K.M."/>
            <person name="Hurst M.A."/>
            <person name="Kaine B.P."/>
            <person name="Borodovsky M."/>
            <person name="Klenk H.-P."/>
            <person name="Fraser C.M."/>
            <person name="Smith H.O."/>
            <person name="Woese C.R."/>
            <person name="Venter J.C."/>
        </authorList>
    </citation>
    <scope>NUCLEOTIDE SEQUENCE [LARGE SCALE GENOMIC DNA]</scope>
    <source>
        <strain>ATCC 43067 / DSM 2661 / JAL-1 / JCM 10045 / NBRC 100440</strain>
    </source>
</reference>
<accession>Q58209</accession>
<organism>
    <name type="scientific">Methanocaldococcus jannaschii (strain ATCC 43067 / DSM 2661 / JAL-1 / JCM 10045 / NBRC 100440)</name>
    <name type="common">Methanococcus jannaschii</name>
    <dbReference type="NCBI Taxonomy" id="243232"/>
    <lineage>
        <taxon>Archaea</taxon>
        <taxon>Methanobacteriati</taxon>
        <taxon>Methanobacteriota</taxon>
        <taxon>Methanomada group</taxon>
        <taxon>Methanococci</taxon>
        <taxon>Methanococcales</taxon>
        <taxon>Methanocaldococcaceae</taxon>
        <taxon>Methanocaldococcus</taxon>
    </lineage>
</organism>
<feature type="chain" id="PRO_0000107050" description="Uncharacterized protein MJ0799">
    <location>
        <begin position="1"/>
        <end position="296"/>
    </location>
</feature>
<evidence type="ECO:0000305" key="1"/>
<proteinExistence type="predicted"/>
<protein>
    <recommendedName>
        <fullName>Uncharacterized protein MJ0799</fullName>
    </recommendedName>
</protein>
<keyword id="KW-1185">Reference proteome</keyword>
<gene>
    <name type="ordered locus">MJ0799</name>
</gene>
<sequence length="296" mass="33054">MKMENFEYELKMAIEHILETNYPRKAFWHFDDLIDDLKSGIKAGDDAVVIKNMVINMEGPYPLKLGAKTALIHTACDVVAMGAEPKFALNAIQAKNEDEIKLAVDGLRKQSIGLNIPIIGGNTQTVEELKSCISVAVFGELIDENLIIKDGGAKDGDLLIMLGDPVEGDVGERIYKAKKKFDTYLEILENGIKINACKDASRGGWLGNLLEMLIKAKKGAEIKSLPYPRATRYLGTYIIAVPEEEYEKVVDIALKNKCPVVLFGRILEKPKLIIGTKEYISENKMLELIKKFPYKY</sequence>
<dbReference type="EMBL" id="L77117">
    <property type="protein sequence ID" value="AAB98794.1"/>
    <property type="molecule type" value="Genomic_DNA"/>
</dbReference>
<dbReference type="PIR" id="G64399">
    <property type="entry name" value="G64399"/>
</dbReference>
<dbReference type="SMR" id="Q58209"/>
<dbReference type="FunCoup" id="Q58209">
    <property type="interactions" value="1"/>
</dbReference>
<dbReference type="STRING" id="243232.MJ_0799"/>
<dbReference type="PaxDb" id="243232-MJ_0799"/>
<dbReference type="EnsemblBacteria" id="AAB98794">
    <property type="protein sequence ID" value="AAB98794"/>
    <property type="gene ID" value="MJ_0799"/>
</dbReference>
<dbReference type="KEGG" id="mja:MJ_0799"/>
<dbReference type="eggNOG" id="arCOG00642">
    <property type="taxonomic scope" value="Archaea"/>
</dbReference>
<dbReference type="HOGENOM" id="CLU_948680_0_0_2"/>
<dbReference type="InParanoid" id="Q58209"/>
<dbReference type="PhylomeDB" id="Q58209"/>
<dbReference type="Proteomes" id="UP000000805">
    <property type="component" value="Chromosome"/>
</dbReference>
<dbReference type="GO" id="GO:0009030">
    <property type="term" value="F:thiamine-phosphate kinase activity"/>
    <property type="evidence" value="ECO:0007669"/>
    <property type="project" value="InterPro"/>
</dbReference>
<dbReference type="GO" id="GO:0009228">
    <property type="term" value="P:thiamine biosynthetic process"/>
    <property type="evidence" value="ECO:0007669"/>
    <property type="project" value="InterPro"/>
</dbReference>
<dbReference type="Gene3D" id="3.90.650.10">
    <property type="entry name" value="PurM-like C-terminal domain"/>
    <property type="match status" value="1"/>
</dbReference>
<dbReference type="Gene3D" id="3.30.1330.10">
    <property type="entry name" value="PurM-like, N-terminal domain"/>
    <property type="match status" value="1"/>
</dbReference>
<dbReference type="InterPro" id="IPR010918">
    <property type="entry name" value="PurM-like_C_dom"/>
</dbReference>
<dbReference type="InterPro" id="IPR036676">
    <property type="entry name" value="PurM-like_C_sf"/>
</dbReference>
<dbReference type="InterPro" id="IPR016188">
    <property type="entry name" value="PurM-like_N"/>
</dbReference>
<dbReference type="InterPro" id="IPR036921">
    <property type="entry name" value="PurM-like_N_sf"/>
</dbReference>
<dbReference type="InterPro" id="IPR006283">
    <property type="entry name" value="ThiL-like"/>
</dbReference>
<dbReference type="InterPro" id="IPR011414">
    <property type="entry name" value="UCP036541_AIR"/>
</dbReference>
<dbReference type="PANTHER" id="PTHR30270">
    <property type="entry name" value="THIAMINE-MONOPHOSPHATE KINASE"/>
    <property type="match status" value="1"/>
</dbReference>
<dbReference type="PANTHER" id="PTHR30270:SF3">
    <property type="entry name" value="THIAMINE-MONOPHOSPHATE KINASE"/>
    <property type="match status" value="1"/>
</dbReference>
<dbReference type="Pfam" id="PF00586">
    <property type="entry name" value="AIRS"/>
    <property type="match status" value="1"/>
</dbReference>
<dbReference type="Pfam" id="PF02769">
    <property type="entry name" value="AIRS_C"/>
    <property type="match status" value="1"/>
</dbReference>
<dbReference type="PIRSF" id="PIRSF036541">
    <property type="entry name" value="UCP036541_AIR"/>
    <property type="match status" value="1"/>
</dbReference>
<dbReference type="SUPFAM" id="SSF56042">
    <property type="entry name" value="PurM C-terminal domain-like"/>
    <property type="match status" value="1"/>
</dbReference>
<dbReference type="SUPFAM" id="SSF55326">
    <property type="entry name" value="PurM N-terminal domain-like"/>
    <property type="match status" value="1"/>
</dbReference>
<name>Y799_METJA</name>
<comment type="similarity">
    <text evidence="1">To Synechocystis PCC 6803 sll0787 and M.jannaschii MJ0640.</text>
</comment>